<organism evidence="7">
    <name type="scientific">Caenorhabditis elegans</name>
    <dbReference type="NCBI Taxonomy" id="6239"/>
    <lineage>
        <taxon>Eukaryota</taxon>
        <taxon>Metazoa</taxon>
        <taxon>Ecdysozoa</taxon>
        <taxon>Nematoda</taxon>
        <taxon>Chromadorea</taxon>
        <taxon>Rhabditida</taxon>
        <taxon>Rhabditina</taxon>
        <taxon>Rhabditomorpha</taxon>
        <taxon>Rhabditoidea</taxon>
        <taxon>Rhabditidae</taxon>
        <taxon>Peloderinae</taxon>
        <taxon>Caenorhabditis</taxon>
    </lineage>
</organism>
<name>CUT4_CAEEL</name>
<comment type="function">
    <text evidence="5">Plays a role in alae formation and subsequent cuticle attachment in adults.</text>
</comment>
<comment type="subcellular location">
    <subcellularLocation>
        <location evidence="1">Cell membrane</location>
        <topology evidence="6">Single-pass type I membrane protein</topology>
    </subcellularLocation>
</comment>
<comment type="developmental stage">
    <text evidence="5">Only expressed in adults.</text>
</comment>
<comment type="disruption phenotype">
    <text evidence="5">RNAi-mediated knockdown results in cuticle defects in adults, where the external and internal cuticle under the alae are detached (PubMed:15936343). In addition, alae are present, but they are shallower and often have two or four ridges rather than the three in adult wild-type animals (PubMed:15936343).</text>
</comment>
<sequence>MFHFTRILAAFLLPTLCFCGYSTAPSSTVSIDNSLIGEPEVVCETASISLLFKTRNSFNGKVFVKGYVSEPSCMTVGDGKTGHRFEVRHDSCGVRRQREINGVVISATVIISFHSIFITKIDRAYRVSCFYVEGTKKVHNHVDISALTTQLLESETQLPVCRYEILNEAGGSPIKYARIGDQVYHKWTCVAELENVYCMKVHSCTVYDGQGGPPVTVIDANGCSVDGVILQNLEYTSDLTAGKLAPVFKFADKAGLYFNCQIQLTIKDVNYGCSNTQPQCPTSQYVVEPAQKTTETAEPYPYDSHESGYPTRPANYPVASSRYPIPTTQAPASYPSSPAPPPPGADIDNGYPEPQPIYIAETPENAYDGIVGFNDTEQPFTTSAAYTEDGVYSRLIKRNVVESTEQINASNKKRPVTVGDIDLPERGILVFGLEEMEDGETTNAGDHGATRALREARNSQEKTCFSTSRMYFTLILLCLLFATTVVVFIVIVQKQRQILAQTAFFKP</sequence>
<protein>
    <recommendedName>
        <fullName evidence="8">Cuticlin-4</fullName>
    </recommendedName>
</protein>
<reference evidence="7" key="1">
    <citation type="journal article" date="1998" name="Science">
        <title>Genome sequence of the nematode C. elegans: a platform for investigating biology.</title>
        <authorList>
            <consortium name="The C. elegans sequencing consortium"/>
        </authorList>
    </citation>
    <scope>NUCLEOTIDE SEQUENCE [LARGE SCALE GENOMIC DNA]</scope>
    <source>
        <strain evidence="7">Bristol N2</strain>
    </source>
</reference>
<reference evidence="6" key="2">
    <citation type="journal article" date="2005" name="Dev. Biol.">
        <title>The Zona Pellucida domain containing proteins, CUT-1, CUT-3 and CUT-5, play essential roles in the development of the larval alae in Caenorhabditis elegans.</title>
        <authorList>
            <person name="Sapio M.R."/>
            <person name="Hilliard M.A."/>
            <person name="Cermola M."/>
            <person name="Favre R."/>
            <person name="Bazzicalupo P."/>
        </authorList>
    </citation>
    <scope>FUNCTION</scope>
    <scope>DEVELOPMENTAL STAGE</scope>
    <scope>DISRUPTION PHENOTYPE</scope>
</reference>
<feature type="signal peptide">
    <location>
        <begin position="1"/>
        <end position="19"/>
    </location>
</feature>
<feature type="chain" id="PRO_5004187096" description="Cuticlin-4">
    <location>
        <begin position="20"/>
        <end position="507"/>
    </location>
</feature>
<feature type="topological domain" description="Extracellular" evidence="6">
    <location>
        <begin position="20"/>
        <end position="471"/>
    </location>
</feature>
<feature type="transmembrane region" description="Helical" evidence="1">
    <location>
        <begin position="472"/>
        <end position="492"/>
    </location>
</feature>
<feature type="topological domain" description="Cytoplasmic" evidence="6">
    <location>
        <begin position="493"/>
        <end position="507"/>
    </location>
</feature>
<feature type="domain" description="ZP" evidence="2">
    <location>
        <begin position="42"/>
        <end position="280"/>
    </location>
</feature>
<feature type="region of interest" description="Disordered" evidence="4">
    <location>
        <begin position="292"/>
        <end position="350"/>
    </location>
</feature>
<feature type="glycosylation site" description="N-linked (GlcNAc...) asparagine" evidence="3">
    <location>
        <position position="374"/>
    </location>
</feature>
<feature type="glycosylation site" description="N-linked (GlcNAc...) asparagine" evidence="3">
    <location>
        <position position="408"/>
    </location>
</feature>
<accession>Q19053</accession>
<evidence type="ECO:0000255" key="1"/>
<evidence type="ECO:0000255" key="2">
    <source>
        <dbReference type="PROSITE-ProRule" id="PRU00375"/>
    </source>
</evidence>
<evidence type="ECO:0000255" key="3">
    <source>
        <dbReference type="PROSITE-ProRule" id="PRU00498"/>
    </source>
</evidence>
<evidence type="ECO:0000256" key="4">
    <source>
        <dbReference type="SAM" id="MobiDB-lite"/>
    </source>
</evidence>
<evidence type="ECO:0000269" key="5">
    <source>
    </source>
</evidence>
<evidence type="ECO:0000305" key="6"/>
<evidence type="ECO:0000312" key="7">
    <source>
        <dbReference type="Proteomes" id="UP000001940"/>
    </source>
</evidence>
<evidence type="ECO:0000312" key="8">
    <source>
        <dbReference type="WormBase" id="E04D5.3"/>
    </source>
</evidence>
<gene>
    <name evidence="8" type="primary">cut-4</name>
    <name evidence="8" type="ORF">E04D5.3</name>
</gene>
<keyword id="KW-1003">Cell membrane</keyword>
<keyword id="KW-0193">Cuticle</keyword>
<keyword id="KW-0325">Glycoprotein</keyword>
<keyword id="KW-0472">Membrane</keyword>
<keyword id="KW-1185">Reference proteome</keyword>
<keyword id="KW-0732">Signal</keyword>
<keyword id="KW-0812">Transmembrane</keyword>
<keyword id="KW-1133">Transmembrane helix</keyword>
<proteinExistence type="evidence at transcript level"/>
<dbReference type="EMBL" id="BX284602">
    <property type="protein sequence ID" value="CAA91280.2"/>
    <property type="molecule type" value="Genomic_DNA"/>
</dbReference>
<dbReference type="PIR" id="T20451">
    <property type="entry name" value="T20451"/>
</dbReference>
<dbReference type="RefSeq" id="NP_496242.2">
    <property type="nucleotide sequence ID" value="NM_063841.4"/>
</dbReference>
<dbReference type="SMR" id="Q19053"/>
<dbReference type="FunCoup" id="Q19053">
    <property type="interactions" value="91"/>
</dbReference>
<dbReference type="STRING" id="6239.E04D5.3.1"/>
<dbReference type="GlyCosmos" id="Q19053">
    <property type="glycosylation" value="2 sites, No reported glycans"/>
</dbReference>
<dbReference type="PaxDb" id="6239-E04D5.3"/>
<dbReference type="EnsemblMetazoa" id="E04D5.3.1">
    <property type="protein sequence ID" value="E04D5.3.1"/>
    <property type="gene ID" value="WBGene00008482"/>
</dbReference>
<dbReference type="GeneID" id="184037"/>
<dbReference type="KEGG" id="cel:CELE_E04D5.3"/>
<dbReference type="UCSC" id="E04D5.3">
    <property type="organism name" value="c. elegans"/>
</dbReference>
<dbReference type="AGR" id="WB:WBGene00008482"/>
<dbReference type="CTD" id="184037"/>
<dbReference type="WormBase" id="E04D5.3">
    <property type="protein sequence ID" value="CE37892"/>
    <property type="gene ID" value="WBGene00008482"/>
    <property type="gene designation" value="cut-4"/>
</dbReference>
<dbReference type="eggNOG" id="ENOG502RXCC">
    <property type="taxonomic scope" value="Eukaryota"/>
</dbReference>
<dbReference type="GeneTree" id="ENSGT00940000163650"/>
<dbReference type="HOGENOM" id="CLU_037896_1_0_1"/>
<dbReference type="InParanoid" id="Q19053"/>
<dbReference type="OMA" id="PEPQPIY"/>
<dbReference type="OrthoDB" id="6139674at2759"/>
<dbReference type="PhylomeDB" id="Q19053"/>
<dbReference type="PRO" id="PR:Q19053"/>
<dbReference type="Proteomes" id="UP000001940">
    <property type="component" value="Chromosome II"/>
</dbReference>
<dbReference type="Bgee" id="WBGene00008482">
    <property type="expression patterns" value="Expressed in larva and 2 other cell types or tissues"/>
</dbReference>
<dbReference type="GO" id="GO:0005886">
    <property type="term" value="C:plasma membrane"/>
    <property type="evidence" value="ECO:0007669"/>
    <property type="project" value="UniProtKB-SubCell"/>
</dbReference>
<dbReference type="GO" id="GO:0042302">
    <property type="term" value="F:structural constituent of cuticle"/>
    <property type="evidence" value="ECO:0007669"/>
    <property type="project" value="UniProtKB-KW"/>
</dbReference>
<dbReference type="InterPro" id="IPR056953">
    <property type="entry name" value="CUT_N"/>
</dbReference>
<dbReference type="InterPro" id="IPR051962">
    <property type="entry name" value="Cuticlin"/>
</dbReference>
<dbReference type="InterPro" id="IPR001507">
    <property type="entry name" value="ZP_dom"/>
</dbReference>
<dbReference type="PANTHER" id="PTHR22907:SF57">
    <property type="entry name" value="CUTICLIN-4"/>
    <property type="match status" value="1"/>
</dbReference>
<dbReference type="PANTHER" id="PTHR22907">
    <property type="entry name" value="GH04558P"/>
    <property type="match status" value="1"/>
</dbReference>
<dbReference type="Pfam" id="PF25301">
    <property type="entry name" value="CUT_C"/>
    <property type="match status" value="1"/>
</dbReference>
<dbReference type="Pfam" id="PF25057">
    <property type="entry name" value="CUT_N"/>
    <property type="match status" value="1"/>
</dbReference>
<dbReference type="SMART" id="SM00241">
    <property type="entry name" value="ZP"/>
    <property type="match status" value="1"/>
</dbReference>
<dbReference type="PROSITE" id="PS51034">
    <property type="entry name" value="ZP_2"/>
    <property type="match status" value="1"/>
</dbReference>